<reference key="1">
    <citation type="journal article" date="1996" name="Biochem. J.">
        <title>The catalase-peroxidase of Synechococcus PCC 7942: purification, nucleotide sequence analysis and expression in Escherichia coli.</title>
        <authorList>
            <person name="Mutsuda M."/>
            <person name="Ishikawa T."/>
            <person name="Takeda T."/>
            <person name="Shigeoka S."/>
        </authorList>
    </citation>
    <scope>NUCLEOTIDE SEQUENCE [GENOMIC DNA]</scope>
    <scope>PROTEIN SEQUENCE OF 2-15</scope>
    <scope>BIOPHYSICOCHEMICAL PROPERTIES</scope>
    <scope>HEME-BINDING</scope>
    <scope>SUBUNIT</scope>
</reference>
<reference key="2">
    <citation type="submission" date="2005-08" db="EMBL/GenBank/DDBJ databases">
        <title>Complete sequence of chromosome 1 of Synechococcus elongatus PCC 7942.</title>
        <authorList>
            <consortium name="US DOE Joint Genome Institute"/>
            <person name="Copeland A."/>
            <person name="Lucas S."/>
            <person name="Lapidus A."/>
            <person name="Barry K."/>
            <person name="Detter J.C."/>
            <person name="Glavina T."/>
            <person name="Hammon N."/>
            <person name="Israni S."/>
            <person name="Pitluck S."/>
            <person name="Schmutz J."/>
            <person name="Larimer F."/>
            <person name="Land M."/>
            <person name="Kyrpides N."/>
            <person name="Lykidis A."/>
            <person name="Golden S."/>
            <person name="Richardson P."/>
        </authorList>
    </citation>
    <scope>NUCLEOTIDE SEQUENCE [LARGE SCALE GENOMIC DNA]</scope>
    <source>
        <strain>ATCC 33912 / PCC 7942 / FACHB-805</strain>
    </source>
</reference>
<reference key="3">
    <citation type="submission" date="2004-03" db="PDB data bank">
        <title>Crystal structure of catalase-peroxidase from Synechococcus PCC 7942.</title>
        <authorList>
            <person name="Wada K."/>
            <person name="Tada T."/>
        </authorList>
    </citation>
    <scope>X-RAY CRYSTALLOGRAPHY (1.4 ANGSTROMS) IN COMPLEX WITH HEME</scope>
</reference>
<keyword id="KW-0002">3D-structure</keyword>
<keyword id="KW-0903">Direct protein sequencing</keyword>
<keyword id="KW-0349">Heme</keyword>
<keyword id="KW-0376">Hydrogen peroxide</keyword>
<keyword id="KW-0408">Iron</keyword>
<keyword id="KW-0479">Metal-binding</keyword>
<keyword id="KW-0560">Oxidoreductase</keyword>
<keyword id="KW-0575">Peroxidase</keyword>
<keyword id="KW-1185">Reference proteome</keyword>
<feature type="initiator methionine" description="Removed" evidence="2">
    <location>
        <position position="1"/>
    </location>
</feature>
<feature type="chain" id="PRO_0000345095" description="Catalase-peroxidase">
    <location>
        <begin position="2"/>
        <end position="720"/>
    </location>
</feature>
<feature type="active site" description="Proton acceptor">
    <location>
        <position position="95"/>
    </location>
</feature>
<feature type="binding site" description="axial binding residue">
    <location>
        <position position="263"/>
    </location>
    <ligand>
        <name>heme b</name>
        <dbReference type="ChEBI" id="CHEBI:60344"/>
    </ligand>
    <ligandPart>
        <name>Fe</name>
        <dbReference type="ChEBI" id="CHEBI:18248"/>
    </ligandPart>
</feature>
<feature type="site" description="Transition state stabilizer" evidence="1">
    <location>
        <position position="91"/>
    </location>
</feature>
<feature type="cross-link" description="Tryptophyl-tyrosyl-methioninium (Trp-Tyr) (with M-248)">
    <location>
        <begin position="94"/>
        <end position="222"/>
    </location>
</feature>
<feature type="cross-link" description="Tryptophyl-tyrosyl-methioninium (Tyr-Met) (with W-94)">
    <location>
        <begin position="222"/>
        <end position="248"/>
    </location>
</feature>
<feature type="sequence conflict" description="In Ref. 1; BAA09601." evidence="4" ref="1">
    <original>K</original>
    <variation>Q</variation>
    <location>
        <position position="56"/>
    </location>
</feature>
<feature type="sequence conflict" description="In Ref. 1; BAA09601." evidence="4" ref="1">
    <location>
        <position position="60"/>
    </location>
</feature>
<feature type="sequence conflict" description="In Ref. 1; BAA09601." evidence="4" ref="1">
    <original>V</original>
    <variation>F</variation>
    <location>
        <position position="193"/>
    </location>
</feature>
<feature type="sequence conflict" description="In Ref. 1; BAA09601." evidence="4" ref="1">
    <original>RML</original>
    <variation>AVCS</variation>
    <location>
        <begin position="327"/>
        <end position="329"/>
    </location>
</feature>
<feature type="sequence conflict" description="In Ref. 1; BAA09601." evidence="4" ref="1">
    <original>S</original>
    <variation>N</variation>
    <location>
        <position position="339"/>
    </location>
</feature>
<feature type="sequence conflict" description="In Ref. 1; BAA09601." evidence="4" ref="1">
    <original>A</original>
    <variation>P</variation>
    <location>
        <position position="504"/>
    </location>
</feature>
<feature type="sequence conflict" description="In Ref. 1; BAA09601." evidence="4" ref="1">
    <original>A</original>
    <variation>S</variation>
    <location>
        <position position="514"/>
    </location>
</feature>
<feature type="sequence conflict" description="In Ref. 1; BAA09601." evidence="4" ref="1">
    <original>S</original>
    <variation>T</variation>
    <location>
        <position position="520"/>
    </location>
</feature>
<feature type="sequence conflict" description="In Ref. 1; BAA09601." evidence="4" ref="1">
    <original>A</original>
    <variation>K</variation>
    <location>
        <position position="536"/>
    </location>
</feature>
<feature type="sequence conflict" description="In Ref. 1; BAA09601." evidence="4" ref="1">
    <original>G</original>
    <variation>V</variation>
    <location>
        <position position="625"/>
    </location>
</feature>
<feature type="helix" evidence="6">
    <location>
        <begin position="22"/>
        <end position="25"/>
    </location>
</feature>
<feature type="helix" evidence="6">
    <location>
        <begin position="32"/>
        <end position="35"/>
    </location>
</feature>
<feature type="turn" evidence="6">
    <location>
        <begin position="40"/>
        <end position="42"/>
    </location>
</feature>
<feature type="helix" evidence="6">
    <location>
        <begin position="51"/>
        <end position="55"/>
    </location>
</feature>
<feature type="helix" evidence="6">
    <location>
        <begin position="60"/>
        <end position="71"/>
    </location>
</feature>
<feature type="helix" evidence="6">
    <location>
        <begin position="81"/>
        <end position="83"/>
    </location>
</feature>
<feature type="helix" evidence="6">
    <location>
        <begin position="86"/>
        <end position="97"/>
    </location>
</feature>
<feature type="turn" evidence="6">
    <location>
        <begin position="102"/>
        <end position="104"/>
    </location>
</feature>
<feature type="helix" evidence="8">
    <location>
        <begin position="109"/>
        <end position="111"/>
    </location>
</feature>
<feature type="helix" evidence="6">
    <location>
        <begin position="113"/>
        <end position="115"/>
    </location>
</feature>
<feature type="helix" evidence="6">
    <location>
        <begin position="119"/>
        <end position="121"/>
    </location>
</feature>
<feature type="helix" evidence="6">
    <location>
        <begin position="123"/>
        <end position="125"/>
    </location>
</feature>
<feature type="helix" evidence="6">
    <location>
        <begin position="128"/>
        <end position="134"/>
    </location>
</feature>
<feature type="helix" evidence="6">
    <location>
        <begin position="136"/>
        <end position="142"/>
    </location>
</feature>
<feature type="helix" evidence="6">
    <location>
        <begin position="143"/>
        <end position="145"/>
    </location>
</feature>
<feature type="helix" evidence="6">
    <location>
        <begin position="148"/>
        <end position="163"/>
    </location>
</feature>
<feature type="strand" evidence="6">
    <location>
        <begin position="190"/>
        <end position="193"/>
    </location>
</feature>
<feature type="strand" evidence="6">
    <location>
        <begin position="196"/>
        <end position="198"/>
    </location>
</feature>
<feature type="strand" evidence="6">
    <location>
        <begin position="202"/>
        <end position="204"/>
    </location>
</feature>
<feature type="turn" evidence="6">
    <location>
        <begin position="205"/>
        <end position="207"/>
    </location>
</feature>
<feature type="strand" evidence="6">
    <location>
        <begin position="215"/>
        <end position="217"/>
    </location>
</feature>
<feature type="strand" evidence="6">
    <location>
        <begin position="221"/>
        <end position="223"/>
    </location>
</feature>
<feature type="helix" evidence="6">
    <location>
        <begin position="234"/>
        <end position="247"/>
    </location>
</feature>
<feature type="helix" evidence="6">
    <location>
        <begin position="252"/>
        <end position="263"/>
    </location>
</feature>
<feature type="helix" evidence="6">
    <location>
        <begin position="274"/>
        <end position="276"/>
    </location>
</feature>
<feature type="helix" evidence="6">
    <location>
        <begin position="281"/>
        <end position="283"/>
    </location>
</feature>
<feature type="helix" evidence="6">
    <location>
        <begin position="286"/>
        <end position="288"/>
    </location>
</feature>
<feature type="strand" evidence="6">
    <location>
        <begin position="295"/>
        <end position="298"/>
    </location>
</feature>
<feature type="helix" evidence="6">
    <location>
        <begin position="302"/>
        <end position="304"/>
    </location>
</feature>
<feature type="strand" evidence="6">
    <location>
        <begin position="306"/>
        <end position="309"/>
    </location>
</feature>
<feature type="strand" evidence="6">
    <location>
        <begin position="312"/>
        <end position="316"/>
    </location>
</feature>
<feature type="helix" evidence="6">
    <location>
        <begin position="324"/>
        <end position="331"/>
    </location>
</feature>
<feature type="strand" evidence="6">
    <location>
        <begin position="334"/>
        <end position="338"/>
    </location>
</feature>
<feature type="strand" evidence="6">
    <location>
        <begin position="344"/>
        <end position="350"/>
    </location>
</feature>
<feature type="helix" evidence="6">
    <location>
        <begin position="353"/>
        <end position="355"/>
    </location>
</feature>
<feature type="strand" evidence="8">
    <location>
        <begin position="363"/>
        <end position="366"/>
    </location>
</feature>
<feature type="helix" evidence="6">
    <location>
        <begin position="373"/>
        <end position="380"/>
    </location>
</feature>
<feature type="helix" evidence="6">
    <location>
        <begin position="382"/>
        <end position="393"/>
    </location>
</feature>
<feature type="helix" evidence="6">
    <location>
        <begin position="395"/>
        <end position="411"/>
    </location>
</feature>
<feature type="helix" evidence="6">
    <location>
        <begin position="417"/>
        <end position="419"/>
    </location>
</feature>
<feature type="helix" evidence="6">
    <location>
        <begin position="431"/>
        <end position="433"/>
    </location>
</feature>
<feature type="helix" evidence="6">
    <location>
        <begin position="445"/>
        <end position="454"/>
    </location>
</feature>
<feature type="helix" evidence="6">
    <location>
        <begin position="459"/>
        <end position="470"/>
    </location>
</feature>
<feature type="turn" evidence="6">
    <location>
        <begin position="475"/>
        <end position="478"/>
    </location>
</feature>
<feature type="helix" evidence="6">
    <location>
        <begin position="486"/>
        <end position="488"/>
    </location>
</feature>
<feature type="helix" evidence="6">
    <location>
        <begin position="492"/>
        <end position="494"/>
    </location>
</feature>
<feature type="helix" evidence="6">
    <location>
        <begin position="496"/>
        <end position="498"/>
    </location>
</feature>
<feature type="helix" evidence="6">
    <location>
        <begin position="500"/>
        <end position="517"/>
    </location>
</feature>
<feature type="helix" evidence="6">
    <location>
        <begin position="521"/>
        <end position="539"/>
    </location>
</feature>
<feature type="helix" evidence="6">
    <location>
        <begin position="557"/>
        <end position="559"/>
    </location>
</feature>
<feature type="helix" evidence="6">
    <location>
        <begin position="563"/>
        <end position="568"/>
    </location>
</feature>
<feature type="strand" evidence="6">
    <location>
        <begin position="571"/>
        <end position="573"/>
    </location>
</feature>
<feature type="helix" evidence="6">
    <location>
        <begin position="574"/>
        <end position="576"/>
    </location>
</feature>
<feature type="strand" evidence="6">
    <location>
        <begin position="578"/>
        <end position="581"/>
    </location>
</feature>
<feature type="helix" evidence="6">
    <location>
        <begin position="587"/>
        <end position="598"/>
    </location>
</feature>
<feature type="helix" evidence="6">
    <location>
        <begin position="602"/>
        <end position="615"/>
    </location>
</feature>
<feature type="helix" evidence="6">
    <location>
        <begin position="619"/>
        <end position="621"/>
    </location>
</feature>
<feature type="helix" evidence="6">
    <location>
        <begin position="637"/>
        <end position="642"/>
    </location>
</feature>
<feature type="strand" evidence="6">
    <location>
        <begin position="647"/>
        <end position="651"/>
    </location>
</feature>
<feature type="strand" evidence="6">
    <location>
        <begin position="657"/>
        <end position="661"/>
    </location>
</feature>
<feature type="turn" evidence="6">
    <location>
        <begin position="662"/>
        <end position="664"/>
    </location>
</feature>
<feature type="strand" evidence="6">
    <location>
        <begin position="667"/>
        <end position="671"/>
    </location>
</feature>
<feature type="helix" evidence="6">
    <location>
        <begin position="673"/>
        <end position="676"/>
    </location>
</feature>
<feature type="helix" evidence="6">
    <location>
        <begin position="677"/>
        <end position="679"/>
    </location>
</feature>
<feature type="helix" evidence="6">
    <location>
        <begin position="682"/>
        <end position="692"/>
    </location>
</feature>
<feature type="helix" evidence="5">
    <location>
        <begin position="694"/>
        <end position="696"/>
    </location>
</feature>
<feature type="helix" evidence="6">
    <location>
        <begin position="697"/>
        <end position="712"/>
    </location>
</feature>
<feature type="turn" evidence="6">
    <location>
        <begin position="713"/>
        <end position="715"/>
    </location>
</feature>
<feature type="turn" evidence="7">
    <location>
        <begin position="717"/>
        <end position="719"/>
    </location>
</feature>
<accession>Q31MN3</accession>
<accession>Q55110</accession>
<gene>
    <name evidence="1" type="primary">katG</name>
    <name type="ordered locus">Synpcc7942_1656</name>
</gene>
<sequence>MTATQGKCPVMHGGATTVNISTAEWWPKALNLDILSQHDRKTNPMGPDFNYQEEVKKLDVAALKQDLQALMTDSQDWWPADWGHYGGLMIRLTWHAAGTYRIADGRGGAGTGNQRFAPLNSWPDNTNLDKARRLLWPIKQKYGNKLSWADLIAYAGTIAYESMGLKTFGFAFGREDIWHPEKDIYWGPEKEWVPPSTNPNSRYTGDRELENPLAAVTMGLIYVNPEGVDGNPDPLKTAHDVRVTFARMAMNDEETVALTAGGHTVGKCHGNGNAALLGPEPEGADVEDQGLGWINKTQSGIGRNAVTSGLEGAWTPHPTQWDNGYFRMLLNYDWELKKSPAGAWQWEPINPREEDLPVDVEDPSIRRNLVMTDADMAMKMDPEYRKISERFYQDPAYFADVFARAWFKLTHRDMGPKARYIGPDVPQEDLIWQDPIPAGNRNYDVQAVKDRIAASGLSISELVSTAWDSARTYRNSDKRGGANGARIRLAPQKDWEGNEPDRLAKVLAVLEGIAAATGASVADVIVLAGNVGVEQAARAAGVEIVLPFAPGRGDATAEQTDTESFAVLEPIHDGYRNWLKQDYAATPEELLLDRTQLLGLTAPEMTVLIGGLRVLGTNHGGTKHGVFTDREGVLTNDFFVNLTDMNYLWKPAGKNLYEICDRKTNQVKWTATRVDLVFGSNSILRAYSELYAQDDNKEKFVRDFVAAWTKVMNADRFDLD</sequence>
<dbReference type="EC" id="1.11.1.21" evidence="1"/>
<dbReference type="EMBL" id="D61378">
    <property type="protein sequence ID" value="BAA09601.1"/>
    <property type="status" value="ALT_FRAME"/>
    <property type="molecule type" value="Genomic_DNA"/>
</dbReference>
<dbReference type="EMBL" id="CP000100">
    <property type="protein sequence ID" value="ABB57686.1"/>
    <property type="molecule type" value="Genomic_DNA"/>
</dbReference>
<dbReference type="PIR" id="S71130">
    <property type="entry name" value="S71130"/>
</dbReference>
<dbReference type="RefSeq" id="WP_011244741.1">
    <property type="nucleotide sequence ID" value="NZ_JACJTX010000001.1"/>
</dbReference>
<dbReference type="PDB" id="1UB2">
    <property type="method" value="X-ray"/>
    <property type="resolution" value="2.40 A"/>
    <property type="chains" value="A=1-720"/>
</dbReference>
<dbReference type="PDB" id="3WNU">
    <property type="method" value="X-ray"/>
    <property type="resolution" value="2.20 A"/>
    <property type="chains" value="A=1-720"/>
</dbReference>
<dbReference type="PDB" id="3WXO">
    <property type="method" value="X-ray"/>
    <property type="resolution" value="2.12 A"/>
    <property type="chains" value="A=11-720"/>
</dbReference>
<dbReference type="PDB" id="3X16">
    <property type="method" value="X-ray"/>
    <property type="resolution" value="2.65 A"/>
    <property type="chains" value="A=1-720"/>
</dbReference>
<dbReference type="PDB" id="4PAE">
    <property type="method" value="X-ray"/>
    <property type="resolution" value="3.21 A"/>
    <property type="chains" value="A=1-720"/>
</dbReference>
<dbReference type="PDBsum" id="1UB2"/>
<dbReference type="PDBsum" id="3WNU"/>
<dbReference type="PDBsum" id="3WXO"/>
<dbReference type="PDBsum" id="3X16"/>
<dbReference type="PDBsum" id="4PAE"/>
<dbReference type="SMR" id="Q31MN3"/>
<dbReference type="STRING" id="1140.Synpcc7942_1656"/>
<dbReference type="PeroxiBase" id="2426">
    <property type="entry name" value="SeCP01_PCC7942"/>
</dbReference>
<dbReference type="PaxDb" id="1140-Synpcc7942_1656"/>
<dbReference type="GeneID" id="72430526"/>
<dbReference type="KEGG" id="syf:Synpcc7942_1656"/>
<dbReference type="eggNOG" id="COG0376">
    <property type="taxonomic scope" value="Bacteria"/>
</dbReference>
<dbReference type="HOGENOM" id="CLU_025424_2_0_3"/>
<dbReference type="OrthoDB" id="9759743at2"/>
<dbReference type="BioCyc" id="SYNEL:SYNPCC7942_1656-MONOMER"/>
<dbReference type="BRENDA" id="1.11.1.21">
    <property type="organism ID" value="7781"/>
</dbReference>
<dbReference type="EvolutionaryTrace" id="Q31MN3"/>
<dbReference type="Proteomes" id="UP000889800">
    <property type="component" value="Chromosome"/>
</dbReference>
<dbReference type="GO" id="GO:0005829">
    <property type="term" value="C:cytosol"/>
    <property type="evidence" value="ECO:0007669"/>
    <property type="project" value="TreeGrafter"/>
</dbReference>
<dbReference type="GO" id="GO:0004096">
    <property type="term" value="F:catalase activity"/>
    <property type="evidence" value="ECO:0007669"/>
    <property type="project" value="UniProtKB-UniRule"/>
</dbReference>
<dbReference type="GO" id="GO:0020037">
    <property type="term" value="F:heme binding"/>
    <property type="evidence" value="ECO:0007669"/>
    <property type="project" value="InterPro"/>
</dbReference>
<dbReference type="GO" id="GO:0046872">
    <property type="term" value="F:metal ion binding"/>
    <property type="evidence" value="ECO:0007669"/>
    <property type="project" value="UniProtKB-KW"/>
</dbReference>
<dbReference type="GO" id="GO:0070301">
    <property type="term" value="P:cellular response to hydrogen peroxide"/>
    <property type="evidence" value="ECO:0007669"/>
    <property type="project" value="TreeGrafter"/>
</dbReference>
<dbReference type="GO" id="GO:0042744">
    <property type="term" value="P:hydrogen peroxide catabolic process"/>
    <property type="evidence" value="ECO:0007669"/>
    <property type="project" value="UniProtKB-KW"/>
</dbReference>
<dbReference type="CDD" id="cd00649">
    <property type="entry name" value="catalase_peroxidase_1"/>
    <property type="match status" value="1"/>
</dbReference>
<dbReference type="CDD" id="cd08200">
    <property type="entry name" value="catalase_peroxidase_2"/>
    <property type="match status" value="1"/>
</dbReference>
<dbReference type="FunFam" id="1.10.420.10:FF:000002">
    <property type="entry name" value="Catalase-peroxidase"/>
    <property type="match status" value="1"/>
</dbReference>
<dbReference type="FunFam" id="1.10.420.10:FF:000004">
    <property type="entry name" value="Catalase-peroxidase"/>
    <property type="match status" value="1"/>
</dbReference>
<dbReference type="FunFam" id="1.10.520.10:FF:000002">
    <property type="entry name" value="Catalase-peroxidase"/>
    <property type="match status" value="1"/>
</dbReference>
<dbReference type="Gene3D" id="1.10.520.10">
    <property type="match status" value="2"/>
</dbReference>
<dbReference type="Gene3D" id="1.10.420.10">
    <property type="entry name" value="Peroxidase, domain 2"/>
    <property type="match status" value="2"/>
</dbReference>
<dbReference type="HAMAP" id="MF_01961">
    <property type="entry name" value="Catal_peroxid"/>
    <property type="match status" value="1"/>
</dbReference>
<dbReference type="InterPro" id="IPR000763">
    <property type="entry name" value="Catalase_peroxidase"/>
</dbReference>
<dbReference type="InterPro" id="IPR002016">
    <property type="entry name" value="Haem_peroxidase"/>
</dbReference>
<dbReference type="InterPro" id="IPR010255">
    <property type="entry name" value="Haem_peroxidase_sf"/>
</dbReference>
<dbReference type="InterPro" id="IPR019794">
    <property type="entry name" value="Peroxidases_AS"/>
</dbReference>
<dbReference type="NCBIfam" id="TIGR00198">
    <property type="entry name" value="cat_per_HPI"/>
    <property type="match status" value="1"/>
</dbReference>
<dbReference type="NCBIfam" id="NF011635">
    <property type="entry name" value="PRK15061.1"/>
    <property type="match status" value="1"/>
</dbReference>
<dbReference type="PANTHER" id="PTHR30555:SF6">
    <property type="entry name" value="CATALASE-PEROXIDASE"/>
    <property type="match status" value="1"/>
</dbReference>
<dbReference type="PANTHER" id="PTHR30555">
    <property type="entry name" value="HYDROPEROXIDASE I, BIFUNCTIONAL CATALASE-PEROXIDASE"/>
    <property type="match status" value="1"/>
</dbReference>
<dbReference type="Pfam" id="PF00141">
    <property type="entry name" value="peroxidase"/>
    <property type="match status" value="2"/>
</dbReference>
<dbReference type="PRINTS" id="PR00460">
    <property type="entry name" value="BPEROXIDASE"/>
</dbReference>
<dbReference type="PRINTS" id="PR00458">
    <property type="entry name" value="PEROXIDASE"/>
</dbReference>
<dbReference type="SUPFAM" id="SSF48113">
    <property type="entry name" value="Heme-dependent peroxidases"/>
    <property type="match status" value="2"/>
</dbReference>
<dbReference type="PROSITE" id="PS00436">
    <property type="entry name" value="PEROXIDASE_2"/>
    <property type="match status" value="1"/>
</dbReference>
<dbReference type="PROSITE" id="PS50873">
    <property type="entry name" value="PEROXIDASE_4"/>
    <property type="match status" value="2"/>
</dbReference>
<protein>
    <recommendedName>
        <fullName evidence="1">Catalase-peroxidase</fullName>
        <shortName evidence="1">CP</shortName>
        <ecNumber evidence="1">1.11.1.21</ecNumber>
    </recommendedName>
    <alternativeName>
        <fullName evidence="1">Peroxidase/catalase</fullName>
    </alternativeName>
</protein>
<organism>
    <name type="scientific">Synechococcus elongatus (strain ATCC 33912 / PCC 7942 / FACHB-805)</name>
    <name type="common">Anacystis nidulans R2</name>
    <dbReference type="NCBI Taxonomy" id="1140"/>
    <lineage>
        <taxon>Bacteria</taxon>
        <taxon>Bacillati</taxon>
        <taxon>Cyanobacteriota</taxon>
        <taxon>Cyanophyceae</taxon>
        <taxon>Synechococcales</taxon>
        <taxon>Synechococcaceae</taxon>
        <taxon>Synechococcus</taxon>
    </lineage>
</organism>
<name>KATG_SYNE7</name>
<evidence type="ECO:0000255" key="1">
    <source>
        <dbReference type="HAMAP-Rule" id="MF_01961"/>
    </source>
</evidence>
<evidence type="ECO:0000269" key="2">
    <source>
    </source>
</evidence>
<evidence type="ECO:0000269" key="3">
    <source ref="3"/>
</evidence>
<evidence type="ECO:0000305" key="4"/>
<evidence type="ECO:0007829" key="5">
    <source>
        <dbReference type="PDB" id="3WNU"/>
    </source>
</evidence>
<evidence type="ECO:0007829" key="6">
    <source>
        <dbReference type="PDB" id="3WXO"/>
    </source>
</evidence>
<evidence type="ECO:0007829" key="7">
    <source>
        <dbReference type="PDB" id="3X16"/>
    </source>
</evidence>
<evidence type="ECO:0007829" key="8">
    <source>
        <dbReference type="PDB" id="4PAE"/>
    </source>
</evidence>
<comment type="function">
    <text>Bifunctional enzyme with both catalase and broad-spectrum peroxidase activity.</text>
</comment>
<comment type="catalytic activity">
    <reaction evidence="1">
        <text>H2O2 + AH2 = A + 2 H2O</text>
        <dbReference type="Rhea" id="RHEA:30275"/>
        <dbReference type="ChEBI" id="CHEBI:13193"/>
        <dbReference type="ChEBI" id="CHEBI:15377"/>
        <dbReference type="ChEBI" id="CHEBI:16240"/>
        <dbReference type="ChEBI" id="CHEBI:17499"/>
        <dbReference type="EC" id="1.11.1.21"/>
    </reaction>
</comment>
<comment type="catalytic activity">
    <reaction evidence="1">
        <text>2 H2O2 = O2 + 2 H2O</text>
        <dbReference type="Rhea" id="RHEA:20309"/>
        <dbReference type="ChEBI" id="CHEBI:15377"/>
        <dbReference type="ChEBI" id="CHEBI:15379"/>
        <dbReference type="ChEBI" id="CHEBI:16240"/>
        <dbReference type="EC" id="1.11.1.21"/>
    </reaction>
</comment>
<comment type="cofactor">
    <cofactor>
        <name>heme b</name>
        <dbReference type="ChEBI" id="CHEBI:60344"/>
    </cofactor>
    <text>Binds 1 heme b (iron(II)-protoporphyrin IX) group per dimer.</text>
</comment>
<comment type="biophysicochemical properties">
    <kinetics>
        <KM evidence="2">4.2 mM for H(2)O(2) for catalase activity</KM>
    </kinetics>
    <phDependence>
        <text evidence="2">Optimum pH is 6.5 for catalase activity. Active from pH 4.5 to 8.5.</text>
    </phDependence>
</comment>
<comment type="subunit">
    <text evidence="2 3">Homodimer.</text>
</comment>
<comment type="PTM">
    <text evidence="1">Formation of the three residue Trp-Tyr-Met cross-link is important for the catalase, but not the peroxidase activity of the enzyme.</text>
</comment>
<comment type="similarity">
    <text evidence="1">Belongs to the peroxidase family. Peroxidase/catalase subfamily.</text>
</comment>
<comment type="sequence caution" evidence="4">
    <conflict type="frameshift">
        <sequence resource="EMBL-CDS" id="BAA09601"/>
    </conflict>
</comment>
<proteinExistence type="evidence at protein level"/>